<evidence type="ECO:0000255" key="1"/>
<evidence type="ECO:0000255" key="2">
    <source>
        <dbReference type="PROSITE-ProRule" id="PRU00498"/>
    </source>
</evidence>
<evidence type="ECO:0000256" key="3">
    <source>
        <dbReference type="SAM" id="MobiDB-lite"/>
    </source>
</evidence>
<evidence type="ECO:0000269" key="4">
    <source>
    </source>
</evidence>
<evidence type="ECO:0000303" key="5">
    <source>
    </source>
</evidence>
<evidence type="ECO:0000305" key="6"/>
<evidence type="ECO:0000305" key="7">
    <source>
    </source>
</evidence>
<comment type="function">
    <text evidence="7">MFS efflux transporter probably involved in thioclapurine export (PubMed:27390873).</text>
</comment>
<comment type="subcellular location">
    <subcellularLocation>
        <location evidence="6">Cell membrane</location>
        <topology evidence="1">Multi-pass membrane protein</topology>
    </subcellularLocation>
</comment>
<comment type="induction">
    <text evidence="4">Expression is positively regulated by the thioclapurine cluster-specific transcription factor tcpZ (PubMed:27390873).</text>
</comment>
<comment type="similarity">
    <text evidence="6">Belongs to the major facilitator superfamily.</text>
</comment>
<reference key="1">
    <citation type="journal article" date="2013" name="PLoS Genet.">
        <title>Plant-symbiotic fungi as chemical engineers: Multi-genome analysis of the Clavicipitaceae reveals dynamics of alkaloid loci.</title>
        <authorList>
            <person name="Schardl C.L."/>
            <person name="Young C.A."/>
            <person name="Hesse U."/>
            <person name="Amyotte S.G."/>
            <person name="Andreeva K."/>
            <person name="Calie P.J."/>
            <person name="Fleetwood D.J."/>
            <person name="Haws D.C."/>
            <person name="Moore N."/>
            <person name="Oeser B."/>
            <person name="Panaccione D.G."/>
            <person name="Schweri K.K."/>
            <person name="Voisey C.R."/>
            <person name="Farman M.L."/>
            <person name="Jaromczyk J.W."/>
            <person name="Roe B.A."/>
            <person name="O'Sullivan D.M."/>
            <person name="Scott B."/>
            <person name="Tudzynski P."/>
            <person name="An Z."/>
            <person name="Arnaoudova E.G."/>
            <person name="Bullock C.T."/>
            <person name="Charlton N.D."/>
            <person name="Chen L."/>
            <person name="Cox M."/>
            <person name="Dinkins R.D."/>
            <person name="Florea S."/>
            <person name="Glenn A.E."/>
            <person name="Gordon A."/>
            <person name="Gueldener U."/>
            <person name="Harris D.R."/>
            <person name="Hollin W."/>
            <person name="Jaromczyk J."/>
            <person name="Johnson R.D."/>
            <person name="Khan A.K."/>
            <person name="Leistner E."/>
            <person name="Leuchtmann A."/>
            <person name="Li C."/>
            <person name="Liu J."/>
            <person name="Liu J."/>
            <person name="Liu M."/>
            <person name="Mace W."/>
            <person name="Machado C."/>
            <person name="Nagabhyru P."/>
            <person name="Pan J."/>
            <person name="Schmid J."/>
            <person name="Sugawara K."/>
            <person name="Steiner U."/>
            <person name="Takach J.E."/>
            <person name="Tanaka E."/>
            <person name="Webb J.S."/>
            <person name="Wilson E.V."/>
            <person name="Wiseman J.L."/>
            <person name="Yoshida R."/>
            <person name="Zeng Z."/>
        </authorList>
    </citation>
    <scope>NUCLEOTIDE SEQUENCE [LARGE SCALE GENOMIC DNA]</scope>
    <source>
        <strain>20.1</strain>
    </source>
</reference>
<reference key="2">
    <citation type="journal article" date="2016" name="PLoS ONE">
        <title>The epipolythiodiketopiperazine gene cluster in Claviceps purpurea: dysfunctional cytochrome P450 enzyme prevents formation of the previously unknown clapurines.</title>
        <authorList>
            <person name="Dopstadt J."/>
            <person name="Neubauer L."/>
            <person name="Tudzynski P."/>
            <person name="Humpf H.U."/>
        </authorList>
    </citation>
    <scope>FUNCTION</scope>
    <scope>INDUCTION</scope>
</reference>
<dbReference type="EMBL" id="CAGA01000011">
    <property type="protein sequence ID" value="CCE28984.1"/>
    <property type="molecule type" value="Genomic_DNA"/>
</dbReference>
<dbReference type="SMR" id="M1WCQ0"/>
<dbReference type="STRING" id="1111077.M1WCQ0"/>
<dbReference type="GlyCosmos" id="M1WCQ0">
    <property type="glycosylation" value="4 sites, No reported glycans"/>
</dbReference>
<dbReference type="VEuPathDB" id="FungiDB:CPUR_02675"/>
<dbReference type="eggNOG" id="KOG0254">
    <property type="taxonomic scope" value="Eukaryota"/>
</dbReference>
<dbReference type="HOGENOM" id="CLU_000960_22_1_1"/>
<dbReference type="OrthoDB" id="10021397at2759"/>
<dbReference type="PhylomeDB" id="M1WCQ0"/>
<dbReference type="Proteomes" id="UP000016801">
    <property type="component" value="Unassembled WGS sequence"/>
</dbReference>
<dbReference type="GO" id="GO:0005886">
    <property type="term" value="C:plasma membrane"/>
    <property type="evidence" value="ECO:0007669"/>
    <property type="project" value="UniProtKB-SubCell"/>
</dbReference>
<dbReference type="GO" id="GO:0022857">
    <property type="term" value="F:transmembrane transporter activity"/>
    <property type="evidence" value="ECO:0007669"/>
    <property type="project" value="InterPro"/>
</dbReference>
<dbReference type="CDD" id="cd17502">
    <property type="entry name" value="MFS_Azr1_MDR_like"/>
    <property type="match status" value="1"/>
</dbReference>
<dbReference type="FunFam" id="1.20.1250.20:FF:000196">
    <property type="entry name" value="MFS toxin efflux pump (AflT)"/>
    <property type="match status" value="1"/>
</dbReference>
<dbReference type="Gene3D" id="1.20.1250.20">
    <property type="entry name" value="MFS general substrate transporter like domains"/>
    <property type="match status" value="2"/>
</dbReference>
<dbReference type="InterPro" id="IPR011701">
    <property type="entry name" value="MFS"/>
</dbReference>
<dbReference type="InterPro" id="IPR020846">
    <property type="entry name" value="MFS_dom"/>
</dbReference>
<dbReference type="InterPro" id="IPR036259">
    <property type="entry name" value="MFS_trans_sf"/>
</dbReference>
<dbReference type="PANTHER" id="PTHR23501">
    <property type="entry name" value="MAJOR FACILITATOR SUPERFAMILY"/>
    <property type="match status" value="1"/>
</dbReference>
<dbReference type="PANTHER" id="PTHR23501:SF199">
    <property type="entry name" value="MFS EFFLUX TRANSPORTER INPD-RELATED"/>
    <property type="match status" value="1"/>
</dbReference>
<dbReference type="Pfam" id="PF07690">
    <property type="entry name" value="MFS_1"/>
    <property type="match status" value="1"/>
</dbReference>
<dbReference type="SUPFAM" id="SSF103473">
    <property type="entry name" value="MFS general substrate transporter"/>
    <property type="match status" value="1"/>
</dbReference>
<dbReference type="PROSITE" id="PS50850">
    <property type="entry name" value="MFS"/>
    <property type="match status" value="1"/>
</dbReference>
<sequence length="542" mass="57747">MATVGTEEKNPIGSASNTAEPNVTEPQKQYASGFKLTIIVISLCLSLFLCGLDQTIITTAVPIITNDFKAIEDVGWYTTAYLLTTSSFQIAYGKLYTTLSVKMILLMALAIFELGSIICAAAPNSTTLIVGRAIAGLGAAGIFPGSTLVLVHAAPMERRPALLGITTGMFGIASLCGPFIGGAFADGASWRWCFIINVPLGVITAVIVTFFVFTPVDPLYAEWTFKDKLAYAKIPEILVLVAALVCLVLGLQWGGTTYAWSDGRIIALLVVFAVLTTAFLVLQVLLPKSRTIPTSIVKNRNIWFASIFALCSSGAMFIAVTYLPIYFQAIKNASALSSGVNVMPLILGFLVMSIISGVITNTTGYYNPSMFLCTILASVGAGLVSTFDVGTPQPKWIGYQALLGFGIGFGLQQPIVCAQHVLDERDVPFGVAFINMMQMLGGAIFVAVSQNVFLNGLANGIAEALPGFNTHKIIEGGLTDFKNLFTSDQLPKAIPVYAHVLGQVFLIATGLCVGTLLGSLGVQWRSVKKAKVTEDQADVERK</sequence>
<protein>
    <recommendedName>
        <fullName evidence="5">MFS thioclapurine efflux transporter tcpA</fullName>
    </recommendedName>
    <alternativeName>
        <fullName evidence="5">Thioclapurine biosynthesis protein A</fullName>
    </alternativeName>
</protein>
<name>TCPA_CLAP2</name>
<keyword id="KW-1003">Cell membrane</keyword>
<keyword id="KW-0325">Glycoprotein</keyword>
<keyword id="KW-0472">Membrane</keyword>
<keyword id="KW-1185">Reference proteome</keyword>
<keyword id="KW-0812">Transmembrane</keyword>
<keyword id="KW-1133">Transmembrane helix</keyword>
<keyword id="KW-0813">Transport</keyword>
<proteinExistence type="evidence at transcript level"/>
<feature type="chain" id="PRO_0000437733" description="MFS thioclapurine efflux transporter tcpA">
    <location>
        <begin position="1"/>
        <end position="542"/>
    </location>
</feature>
<feature type="transmembrane region" description="Helical" evidence="1">
    <location>
        <begin position="32"/>
        <end position="52"/>
    </location>
</feature>
<feature type="transmembrane region" description="Helical" evidence="1">
    <location>
        <begin position="75"/>
        <end position="97"/>
    </location>
</feature>
<feature type="transmembrane region" description="Helical" evidence="1">
    <location>
        <begin position="103"/>
        <end position="123"/>
    </location>
</feature>
<feature type="transmembrane region" description="Helical" evidence="1">
    <location>
        <begin position="133"/>
        <end position="153"/>
    </location>
</feature>
<feature type="transmembrane region" description="Helical" evidence="1">
    <location>
        <begin position="161"/>
        <end position="181"/>
    </location>
</feature>
<feature type="transmembrane region" description="Helical" evidence="1">
    <location>
        <begin position="193"/>
        <end position="213"/>
    </location>
</feature>
<feature type="transmembrane region" description="Helical" evidence="1">
    <location>
        <begin position="234"/>
        <end position="254"/>
    </location>
</feature>
<feature type="transmembrane region" description="Helical" evidence="1">
    <location>
        <begin position="265"/>
        <end position="285"/>
    </location>
</feature>
<feature type="transmembrane region" description="Helical" evidence="1">
    <location>
        <begin position="307"/>
        <end position="327"/>
    </location>
</feature>
<feature type="transmembrane region" description="Helical" evidence="1">
    <location>
        <begin position="339"/>
        <end position="359"/>
    </location>
</feature>
<feature type="transmembrane region" description="Helical" evidence="1">
    <location>
        <begin position="370"/>
        <end position="390"/>
    </location>
</feature>
<feature type="transmembrane region" description="Helical" evidence="1">
    <location>
        <begin position="396"/>
        <end position="416"/>
    </location>
</feature>
<feature type="transmembrane region" description="Helical" evidence="1">
    <location>
        <begin position="427"/>
        <end position="447"/>
    </location>
</feature>
<feature type="transmembrane region" description="Helical" evidence="1">
    <location>
        <begin position="500"/>
        <end position="520"/>
    </location>
</feature>
<feature type="region of interest" description="Disordered" evidence="3">
    <location>
        <begin position="1"/>
        <end position="24"/>
    </location>
</feature>
<feature type="compositionally biased region" description="Basic and acidic residues" evidence="3">
    <location>
        <begin position="1"/>
        <end position="10"/>
    </location>
</feature>
<feature type="compositionally biased region" description="Polar residues" evidence="3">
    <location>
        <begin position="13"/>
        <end position="24"/>
    </location>
</feature>
<feature type="glycosylation site" description="N-linked (GlcNAc...) asparagine" evidence="2">
    <location>
        <position position="22"/>
    </location>
</feature>
<feature type="glycosylation site" description="N-linked (GlcNAc...) asparagine" evidence="2">
    <location>
        <position position="124"/>
    </location>
</feature>
<feature type="glycosylation site" description="N-linked (GlcNAc...) asparagine" evidence="2">
    <location>
        <position position="332"/>
    </location>
</feature>
<feature type="glycosylation site" description="N-linked (GlcNAc...) asparagine" evidence="2">
    <location>
        <position position="361"/>
    </location>
</feature>
<accession>M1WCQ0</accession>
<gene>
    <name evidence="5" type="primary">tcpA</name>
    <name type="ORF">CPUR_02675</name>
</gene>
<organism>
    <name type="scientific">Claviceps purpurea (strain 20.1)</name>
    <name type="common">Ergot fungus</name>
    <name type="synonym">Sphacelia segetum</name>
    <dbReference type="NCBI Taxonomy" id="1111077"/>
    <lineage>
        <taxon>Eukaryota</taxon>
        <taxon>Fungi</taxon>
        <taxon>Dikarya</taxon>
        <taxon>Ascomycota</taxon>
        <taxon>Pezizomycotina</taxon>
        <taxon>Sordariomycetes</taxon>
        <taxon>Hypocreomycetidae</taxon>
        <taxon>Hypocreales</taxon>
        <taxon>Clavicipitaceae</taxon>
        <taxon>Claviceps</taxon>
    </lineage>
</organism>